<proteinExistence type="inferred from homology"/>
<protein>
    <recommendedName>
        <fullName evidence="1">Aminomethyltransferase</fullName>
        <ecNumber evidence="1">2.1.2.10</ecNumber>
    </recommendedName>
    <alternativeName>
        <fullName evidence="1">Glycine cleavage system T protein</fullName>
    </alternativeName>
</protein>
<gene>
    <name evidence="1" type="primary">gcvT</name>
    <name type="ordered locus">ASA_2633</name>
</gene>
<reference key="1">
    <citation type="journal article" date="2008" name="BMC Genomics">
        <title>The genome of Aeromonas salmonicida subsp. salmonicida A449: insights into the evolution of a fish pathogen.</title>
        <authorList>
            <person name="Reith M.E."/>
            <person name="Singh R.K."/>
            <person name="Curtis B."/>
            <person name="Boyd J.M."/>
            <person name="Bouevitch A."/>
            <person name="Kimball J."/>
            <person name="Munholland J."/>
            <person name="Murphy C."/>
            <person name="Sarty D."/>
            <person name="Williams J."/>
            <person name="Nash J.H."/>
            <person name="Johnson S.C."/>
            <person name="Brown L.L."/>
        </authorList>
    </citation>
    <scope>NUCLEOTIDE SEQUENCE [LARGE SCALE GENOMIC DNA]</scope>
    <source>
        <strain>A449</strain>
    </source>
</reference>
<dbReference type="EC" id="2.1.2.10" evidence="1"/>
<dbReference type="EMBL" id="CP000644">
    <property type="protein sequence ID" value="ABO90657.1"/>
    <property type="molecule type" value="Genomic_DNA"/>
</dbReference>
<dbReference type="RefSeq" id="WP_005310363.1">
    <property type="nucleotide sequence ID" value="NC_009348.1"/>
</dbReference>
<dbReference type="SMR" id="A4SP35"/>
<dbReference type="STRING" id="29491.GCA_000820065_00249"/>
<dbReference type="KEGG" id="asa:ASA_2633"/>
<dbReference type="PATRIC" id="fig|382245.13.peg.2600"/>
<dbReference type="eggNOG" id="COG0404">
    <property type="taxonomic scope" value="Bacteria"/>
</dbReference>
<dbReference type="HOGENOM" id="CLU_007884_10_2_6"/>
<dbReference type="Proteomes" id="UP000000225">
    <property type="component" value="Chromosome"/>
</dbReference>
<dbReference type="GO" id="GO:0005829">
    <property type="term" value="C:cytosol"/>
    <property type="evidence" value="ECO:0007669"/>
    <property type="project" value="TreeGrafter"/>
</dbReference>
<dbReference type="GO" id="GO:0005960">
    <property type="term" value="C:glycine cleavage complex"/>
    <property type="evidence" value="ECO:0007669"/>
    <property type="project" value="InterPro"/>
</dbReference>
<dbReference type="GO" id="GO:0004047">
    <property type="term" value="F:aminomethyltransferase activity"/>
    <property type="evidence" value="ECO:0007669"/>
    <property type="project" value="UniProtKB-UniRule"/>
</dbReference>
<dbReference type="GO" id="GO:0008483">
    <property type="term" value="F:transaminase activity"/>
    <property type="evidence" value="ECO:0007669"/>
    <property type="project" value="UniProtKB-KW"/>
</dbReference>
<dbReference type="GO" id="GO:0019464">
    <property type="term" value="P:glycine decarboxylation via glycine cleavage system"/>
    <property type="evidence" value="ECO:0007669"/>
    <property type="project" value="UniProtKB-UniRule"/>
</dbReference>
<dbReference type="FunFam" id="2.40.30.110:FF:000001">
    <property type="entry name" value="Aminomethyltransferase"/>
    <property type="match status" value="1"/>
</dbReference>
<dbReference type="FunFam" id="3.30.70.1400:FF:000001">
    <property type="entry name" value="Aminomethyltransferase"/>
    <property type="match status" value="1"/>
</dbReference>
<dbReference type="FunFam" id="4.10.1250.10:FF:000001">
    <property type="entry name" value="Aminomethyltransferase"/>
    <property type="match status" value="1"/>
</dbReference>
<dbReference type="Gene3D" id="2.40.30.110">
    <property type="entry name" value="Aminomethyltransferase beta-barrel domains"/>
    <property type="match status" value="1"/>
</dbReference>
<dbReference type="Gene3D" id="3.30.70.1400">
    <property type="entry name" value="Aminomethyltransferase beta-barrel domains"/>
    <property type="match status" value="1"/>
</dbReference>
<dbReference type="Gene3D" id="4.10.1250.10">
    <property type="entry name" value="Aminomethyltransferase fragment"/>
    <property type="match status" value="1"/>
</dbReference>
<dbReference type="Gene3D" id="3.30.1360.120">
    <property type="entry name" value="Probable tRNA modification gtpase trme, domain 1"/>
    <property type="match status" value="1"/>
</dbReference>
<dbReference type="HAMAP" id="MF_00259">
    <property type="entry name" value="GcvT"/>
    <property type="match status" value="1"/>
</dbReference>
<dbReference type="InterPro" id="IPR006223">
    <property type="entry name" value="GCS_T"/>
</dbReference>
<dbReference type="InterPro" id="IPR022903">
    <property type="entry name" value="GCS_T_bac"/>
</dbReference>
<dbReference type="InterPro" id="IPR013977">
    <property type="entry name" value="GCST_C"/>
</dbReference>
<dbReference type="InterPro" id="IPR006222">
    <property type="entry name" value="GCV_T_N"/>
</dbReference>
<dbReference type="InterPro" id="IPR028896">
    <property type="entry name" value="GcvT/YgfZ/DmdA"/>
</dbReference>
<dbReference type="InterPro" id="IPR029043">
    <property type="entry name" value="GcvT/YgfZ_C"/>
</dbReference>
<dbReference type="InterPro" id="IPR027266">
    <property type="entry name" value="TrmE/GcvT_dom1"/>
</dbReference>
<dbReference type="NCBIfam" id="TIGR00528">
    <property type="entry name" value="gcvT"/>
    <property type="match status" value="1"/>
</dbReference>
<dbReference type="NCBIfam" id="NF001567">
    <property type="entry name" value="PRK00389.1"/>
    <property type="match status" value="1"/>
</dbReference>
<dbReference type="PANTHER" id="PTHR43757">
    <property type="entry name" value="AMINOMETHYLTRANSFERASE"/>
    <property type="match status" value="1"/>
</dbReference>
<dbReference type="PANTHER" id="PTHR43757:SF2">
    <property type="entry name" value="AMINOMETHYLTRANSFERASE, MITOCHONDRIAL"/>
    <property type="match status" value="1"/>
</dbReference>
<dbReference type="Pfam" id="PF01571">
    <property type="entry name" value="GCV_T"/>
    <property type="match status" value="1"/>
</dbReference>
<dbReference type="Pfam" id="PF08669">
    <property type="entry name" value="GCV_T_C"/>
    <property type="match status" value="1"/>
</dbReference>
<dbReference type="PIRSF" id="PIRSF006487">
    <property type="entry name" value="GcvT"/>
    <property type="match status" value="1"/>
</dbReference>
<dbReference type="SUPFAM" id="SSF101790">
    <property type="entry name" value="Aminomethyltransferase beta-barrel domain"/>
    <property type="match status" value="1"/>
</dbReference>
<dbReference type="SUPFAM" id="SSF103025">
    <property type="entry name" value="Folate-binding domain"/>
    <property type="match status" value="1"/>
</dbReference>
<organism>
    <name type="scientific">Aeromonas salmonicida (strain A449)</name>
    <dbReference type="NCBI Taxonomy" id="382245"/>
    <lineage>
        <taxon>Bacteria</taxon>
        <taxon>Pseudomonadati</taxon>
        <taxon>Pseudomonadota</taxon>
        <taxon>Gammaproteobacteria</taxon>
        <taxon>Aeromonadales</taxon>
        <taxon>Aeromonadaceae</taxon>
        <taxon>Aeromonas</taxon>
    </lineage>
</organism>
<keyword id="KW-0032">Aminotransferase</keyword>
<keyword id="KW-0808">Transferase</keyword>
<evidence type="ECO:0000255" key="1">
    <source>
        <dbReference type="HAMAP-Rule" id="MF_00259"/>
    </source>
</evidence>
<name>GCST_AERS4</name>
<sequence>MIQTTVLHPKHLEAGAKMVDFHGWEMPINYGSQLEEHHAVRTDAGMFDVSHMTIVDLTGERVKAFLQHLLANDVAKLTVPGKALYSGMLNPDGGVIDDLITYYLTDTFYRLVVNSATREKDLAWIRHHAIDFAVSVTERPELAMIAVQGPNAKAKAAKVFTPEQNAAVEGMKPFFGVQAGDLFIATTGYTGEDGYEIVVPQEKACDLWQALLDNGVAPCGLGARDTLRLEAGMNLYSQDMDESISPLAANMAWTLAFEPASRQFIGRAALEAQKAAGTQLKQVGLVMEEKGVLRAGMPVTFTTASGEKREGVITSGSFSPTLGYSIALARVPRDIGEQAEVEIRKKLVTVKVTKPAFVRNGQKLV</sequence>
<feature type="chain" id="PRO_1000047642" description="Aminomethyltransferase">
    <location>
        <begin position="1"/>
        <end position="365"/>
    </location>
</feature>
<accession>A4SP35</accession>
<comment type="function">
    <text evidence="1">The glycine cleavage system catalyzes the degradation of glycine.</text>
</comment>
<comment type="catalytic activity">
    <reaction evidence="1">
        <text>N(6)-[(R)-S(8)-aminomethyldihydrolipoyl]-L-lysyl-[protein] + (6S)-5,6,7,8-tetrahydrofolate = N(6)-[(R)-dihydrolipoyl]-L-lysyl-[protein] + (6R)-5,10-methylene-5,6,7,8-tetrahydrofolate + NH4(+)</text>
        <dbReference type="Rhea" id="RHEA:16945"/>
        <dbReference type="Rhea" id="RHEA-COMP:10475"/>
        <dbReference type="Rhea" id="RHEA-COMP:10492"/>
        <dbReference type="ChEBI" id="CHEBI:15636"/>
        <dbReference type="ChEBI" id="CHEBI:28938"/>
        <dbReference type="ChEBI" id="CHEBI:57453"/>
        <dbReference type="ChEBI" id="CHEBI:83100"/>
        <dbReference type="ChEBI" id="CHEBI:83143"/>
        <dbReference type="EC" id="2.1.2.10"/>
    </reaction>
</comment>
<comment type="subunit">
    <text evidence="1">The glycine cleavage system is composed of four proteins: P, T, L and H.</text>
</comment>
<comment type="similarity">
    <text evidence="1">Belongs to the GcvT family.</text>
</comment>